<comment type="function">
    <text evidence="1">Component of the PEX1-PEX6 AAA ATPase complex, a protein dislocase complex that mediates the ATP-dependent extraction of the PEX5 receptor from peroxisomal membranes, an essential step for PEX5 recycling. Specifically recognizes PEX5 monoubiquitinated at 'Cys-6', and pulls it out of the peroxisome lumen through the PEX2-PEX10-PEX12 retrotranslocation channel. Extraction by the PEX1-PEX6 AAA ATPase complex is accompanied by unfolding of the TPR repeats and release of bound cargo from PEX5.</text>
</comment>
<comment type="catalytic activity">
    <reaction evidence="1">
        <text>ATP + H2O = ADP + phosphate + H(+)</text>
        <dbReference type="Rhea" id="RHEA:13065"/>
        <dbReference type="ChEBI" id="CHEBI:15377"/>
        <dbReference type="ChEBI" id="CHEBI:15378"/>
        <dbReference type="ChEBI" id="CHEBI:30616"/>
        <dbReference type="ChEBI" id="CHEBI:43474"/>
        <dbReference type="ChEBI" id="CHEBI:456216"/>
    </reaction>
    <physiologicalReaction direction="left-to-right" evidence="1">
        <dbReference type="Rhea" id="RHEA:13066"/>
    </physiologicalReaction>
</comment>
<comment type="subunit">
    <text evidence="1">Interacts with PEX1; forming the PEX1-PEX6 AAA ATPase complex, which is composed of a heterohexamer formed by a trimer of PEX1-PEX6 dimers.</text>
</comment>
<comment type="subcellular location">
    <subcellularLocation>
        <location evidence="3">Cytoplasm</location>
        <location evidence="3">Cytosol</location>
    </subcellularLocation>
    <subcellularLocation>
        <location evidence="1">Peroxisome membrane</location>
        <topology evidence="1">Peripheral membrane protein</topology>
        <orientation evidence="1">Cytoplasmic side</orientation>
    </subcellularLocation>
</comment>
<comment type="similarity">
    <text evidence="4">Belongs to the AAA ATPase family.</text>
</comment>
<organism>
    <name type="scientific">Schizosaccharomyces pombe (strain 972 / ATCC 24843)</name>
    <name type="common">Fission yeast</name>
    <dbReference type="NCBI Taxonomy" id="284812"/>
    <lineage>
        <taxon>Eukaryota</taxon>
        <taxon>Fungi</taxon>
        <taxon>Dikarya</taxon>
        <taxon>Ascomycota</taxon>
        <taxon>Taphrinomycotina</taxon>
        <taxon>Schizosaccharomycetes</taxon>
        <taxon>Schizosaccharomycetales</taxon>
        <taxon>Schizosaccharomycetaceae</taxon>
        <taxon>Schizosaccharomyces</taxon>
    </lineage>
</organism>
<sequence length="948" mass="106506">MENRICTLAKPLPKLDESKQAWVSYLWLKKALPGFEEHSAYVYMTTNPTIAGRIFLPINNEDLEDGTVEISGYDNLLADALYISTIAPVKLDFVQLIVIDDNSQDQDAIIERIKGRNAILMESDFINQNILVQVCQPVRHGVVDSETKFVIERKDSFTFLASNEKNISSFKRGKTETDAELVIRPSKVHTEIQWCLQNCSLIHVPFELLFNVGKKNGCPISLRLSDGKNVYGIASIKSDTEHDSVQLSPSLHYFDEFNESVISEEGTEAFLVARGPSVGIASRISLRTIPTQSCFSEKLLKAANLCVVQQVKQKVFLQSKQIFCVPINSLMANSDSVDILELTRNTDAYIWYSVEEIDPLNTYNIYYTNEDTSIVLDTQLSHRLLPSLRKPLLNFVKVHPPSQKLLRFCRAFFDPQQVPGFNPFFLLHGNPFTGKTKAVEEVASLFSAPVFTISSYEFADATADHLEAKLDMFVQNVVKSPCAIIFVKDLDVLSISSDEGNIVPGSKSIQILLSKIDLVKSPQGRYIVIGTCHSIEKIPYEILSESFFELKFSELEMDERLELLKIYANNVIIDKRISLKDVALKTNSMSFGELECLPDHMTKAAVDRIKRTGYDNDSIILSGPIITEQDVDVSINRIRKEKSNTIFTVPKVNWDDIGGLEEAKTVLRDTLQLPLQFPELFSQGLKPRSGVLLYGPPGTGKTLLAKAVATELSLEFVSIKGPELLNMYVGESEANVRNVFEKARNSSPCVIFFDELDSIAPHRGNSSDSGNVMDRVVSQLLAELDSISKDNNKYVFVIGATNRPDLLDPSLLRPGRFDKLVYLGINKSEESKASMLRALTKTFKLDETIDLNEIAKNCHPNFTGADMYALCSDAVLSAIKRKTNEIDLLIQASGTDLSTEEFFKRNENQDSLELRITKEDFLTSLKKLRPSISEQELHRYEMVRHQFS</sequence>
<protein>
    <recommendedName>
        <fullName evidence="4">Peroxisomal ATPase pex6</fullName>
        <ecNumber evidence="1">3.6.4.-</ecNumber>
    </recommendedName>
    <alternativeName>
        <fullName>Peroxin-6</fullName>
    </alternativeName>
    <alternativeName>
        <fullName>Peroxisome biosynthesis protein pex6</fullName>
    </alternativeName>
</protein>
<proteinExistence type="inferred from homology"/>
<name>PEX6_SCHPO</name>
<reference key="1">
    <citation type="journal article" date="2002" name="Nature">
        <title>The genome sequence of Schizosaccharomyces pombe.</title>
        <authorList>
            <person name="Wood V."/>
            <person name="Gwilliam R."/>
            <person name="Rajandream M.A."/>
            <person name="Lyne M.H."/>
            <person name="Lyne R."/>
            <person name="Stewart A."/>
            <person name="Sgouros J.G."/>
            <person name="Peat N."/>
            <person name="Hayles J."/>
            <person name="Baker S.G."/>
            <person name="Basham D."/>
            <person name="Bowman S."/>
            <person name="Brooks K."/>
            <person name="Brown D."/>
            <person name="Brown S."/>
            <person name="Chillingworth T."/>
            <person name="Churcher C.M."/>
            <person name="Collins M."/>
            <person name="Connor R."/>
            <person name="Cronin A."/>
            <person name="Davis P."/>
            <person name="Feltwell T."/>
            <person name="Fraser A."/>
            <person name="Gentles S."/>
            <person name="Goble A."/>
            <person name="Hamlin N."/>
            <person name="Harris D.E."/>
            <person name="Hidalgo J."/>
            <person name="Hodgson G."/>
            <person name="Holroyd S."/>
            <person name="Hornsby T."/>
            <person name="Howarth S."/>
            <person name="Huckle E.J."/>
            <person name="Hunt S."/>
            <person name="Jagels K."/>
            <person name="James K.D."/>
            <person name="Jones L."/>
            <person name="Jones M."/>
            <person name="Leather S."/>
            <person name="McDonald S."/>
            <person name="McLean J."/>
            <person name="Mooney P."/>
            <person name="Moule S."/>
            <person name="Mungall K.L."/>
            <person name="Murphy L.D."/>
            <person name="Niblett D."/>
            <person name="Odell C."/>
            <person name="Oliver K."/>
            <person name="O'Neil S."/>
            <person name="Pearson D."/>
            <person name="Quail M.A."/>
            <person name="Rabbinowitsch E."/>
            <person name="Rutherford K.M."/>
            <person name="Rutter S."/>
            <person name="Saunders D."/>
            <person name="Seeger K."/>
            <person name="Sharp S."/>
            <person name="Skelton J."/>
            <person name="Simmonds M.N."/>
            <person name="Squares R."/>
            <person name="Squares S."/>
            <person name="Stevens K."/>
            <person name="Taylor K."/>
            <person name="Taylor R.G."/>
            <person name="Tivey A."/>
            <person name="Walsh S.V."/>
            <person name="Warren T."/>
            <person name="Whitehead S."/>
            <person name="Woodward J.R."/>
            <person name="Volckaert G."/>
            <person name="Aert R."/>
            <person name="Robben J."/>
            <person name="Grymonprez B."/>
            <person name="Weltjens I."/>
            <person name="Vanstreels E."/>
            <person name="Rieger M."/>
            <person name="Schaefer M."/>
            <person name="Mueller-Auer S."/>
            <person name="Gabel C."/>
            <person name="Fuchs M."/>
            <person name="Duesterhoeft A."/>
            <person name="Fritzc C."/>
            <person name="Holzer E."/>
            <person name="Moestl D."/>
            <person name="Hilbert H."/>
            <person name="Borzym K."/>
            <person name="Langer I."/>
            <person name="Beck A."/>
            <person name="Lehrach H."/>
            <person name="Reinhardt R."/>
            <person name="Pohl T.M."/>
            <person name="Eger P."/>
            <person name="Zimmermann W."/>
            <person name="Wedler H."/>
            <person name="Wambutt R."/>
            <person name="Purnelle B."/>
            <person name="Goffeau A."/>
            <person name="Cadieu E."/>
            <person name="Dreano S."/>
            <person name="Gloux S."/>
            <person name="Lelaure V."/>
            <person name="Mottier S."/>
            <person name="Galibert F."/>
            <person name="Aves S.J."/>
            <person name="Xiang Z."/>
            <person name="Hunt C."/>
            <person name="Moore K."/>
            <person name="Hurst S.M."/>
            <person name="Lucas M."/>
            <person name="Rochet M."/>
            <person name="Gaillardin C."/>
            <person name="Tallada V.A."/>
            <person name="Garzon A."/>
            <person name="Thode G."/>
            <person name="Daga R.R."/>
            <person name="Cruzado L."/>
            <person name="Jimenez J."/>
            <person name="Sanchez M."/>
            <person name="del Rey F."/>
            <person name="Benito J."/>
            <person name="Dominguez A."/>
            <person name="Revuelta J.L."/>
            <person name="Moreno S."/>
            <person name="Armstrong J."/>
            <person name="Forsburg S.L."/>
            <person name="Cerutti L."/>
            <person name="Lowe T."/>
            <person name="McCombie W.R."/>
            <person name="Paulsen I."/>
            <person name="Potashkin J."/>
            <person name="Shpakovski G.V."/>
            <person name="Ussery D."/>
            <person name="Barrell B.G."/>
            <person name="Nurse P."/>
        </authorList>
    </citation>
    <scope>NUCLEOTIDE SEQUENCE [LARGE SCALE GENOMIC DNA]</scope>
    <source>
        <strain>972 / ATCC 24843</strain>
    </source>
</reference>
<reference key="2">
    <citation type="journal article" date="2006" name="Nat. Biotechnol.">
        <title>ORFeome cloning and global analysis of protein localization in the fission yeast Schizosaccharomyces pombe.</title>
        <authorList>
            <person name="Matsuyama A."/>
            <person name="Arai R."/>
            <person name="Yashiroda Y."/>
            <person name="Shirai A."/>
            <person name="Kamata A."/>
            <person name="Sekido S."/>
            <person name="Kobayashi Y."/>
            <person name="Hashimoto A."/>
            <person name="Hamamoto M."/>
            <person name="Hiraoka Y."/>
            <person name="Horinouchi S."/>
            <person name="Yoshida M."/>
        </authorList>
    </citation>
    <scope>SUBCELLULAR LOCATION [LARGE SCALE ANALYSIS]</scope>
</reference>
<evidence type="ECO:0000250" key="1">
    <source>
        <dbReference type="UniProtKB" id="P33760"/>
    </source>
</evidence>
<evidence type="ECO:0000255" key="2"/>
<evidence type="ECO:0000269" key="3">
    <source>
    </source>
</evidence>
<evidence type="ECO:0000305" key="4"/>
<gene>
    <name type="primary">pex6</name>
    <name type="ORF">SPAC17A5.01</name>
</gene>
<accession>O13764</accession>
<keyword id="KW-0067">ATP-binding</keyword>
<keyword id="KW-0963">Cytoplasm</keyword>
<keyword id="KW-0378">Hydrolase</keyword>
<keyword id="KW-0472">Membrane</keyword>
<keyword id="KW-0547">Nucleotide-binding</keyword>
<keyword id="KW-0576">Peroxisome</keyword>
<keyword id="KW-0962">Peroxisome biogenesis</keyword>
<keyword id="KW-1185">Reference proteome</keyword>
<dbReference type="EC" id="3.6.4.-" evidence="1"/>
<dbReference type="EMBL" id="CU329670">
    <property type="protein sequence ID" value="CAB11501.1"/>
    <property type="molecule type" value="Genomic_DNA"/>
</dbReference>
<dbReference type="PIR" id="T37816">
    <property type="entry name" value="T37816"/>
</dbReference>
<dbReference type="RefSeq" id="NP_593468.1">
    <property type="nucleotide sequence ID" value="NM_001018901.2"/>
</dbReference>
<dbReference type="SMR" id="O13764"/>
<dbReference type="BioGRID" id="278899">
    <property type="interactions" value="20"/>
</dbReference>
<dbReference type="FunCoup" id="O13764">
    <property type="interactions" value="126"/>
</dbReference>
<dbReference type="STRING" id="284812.O13764"/>
<dbReference type="iPTMnet" id="O13764"/>
<dbReference type="PaxDb" id="4896-SPAC17A5.01.1"/>
<dbReference type="EnsemblFungi" id="SPAC17A5.01.1">
    <property type="protein sequence ID" value="SPAC17A5.01.1:pep"/>
    <property type="gene ID" value="SPAC17A5.01"/>
</dbReference>
<dbReference type="GeneID" id="2542437"/>
<dbReference type="KEGG" id="spo:2542437"/>
<dbReference type="PomBase" id="SPAC17A5.01">
    <property type="gene designation" value="pex6"/>
</dbReference>
<dbReference type="VEuPathDB" id="FungiDB:SPAC17A5.01"/>
<dbReference type="eggNOG" id="KOG0736">
    <property type="taxonomic scope" value="Eukaryota"/>
</dbReference>
<dbReference type="HOGENOM" id="CLU_310384_0_0_1"/>
<dbReference type="InParanoid" id="O13764"/>
<dbReference type="OMA" id="RTITRKF"/>
<dbReference type="PhylomeDB" id="O13764"/>
<dbReference type="PRO" id="PR:O13764"/>
<dbReference type="Proteomes" id="UP000002485">
    <property type="component" value="Chromosome I"/>
</dbReference>
<dbReference type="GO" id="GO:0005829">
    <property type="term" value="C:cytosol"/>
    <property type="evidence" value="ECO:0007005"/>
    <property type="project" value="PomBase"/>
</dbReference>
<dbReference type="GO" id="GO:0005634">
    <property type="term" value="C:nucleus"/>
    <property type="evidence" value="ECO:0007005"/>
    <property type="project" value="PomBase"/>
</dbReference>
<dbReference type="GO" id="GO:0005778">
    <property type="term" value="C:peroxisomal membrane"/>
    <property type="evidence" value="ECO:0000318"/>
    <property type="project" value="GO_Central"/>
</dbReference>
<dbReference type="GO" id="GO:0005524">
    <property type="term" value="F:ATP binding"/>
    <property type="evidence" value="ECO:0007669"/>
    <property type="project" value="UniProtKB-KW"/>
</dbReference>
<dbReference type="GO" id="GO:0016887">
    <property type="term" value="F:ATP hydrolysis activity"/>
    <property type="evidence" value="ECO:0000318"/>
    <property type="project" value="GO_Central"/>
</dbReference>
<dbReference type="GO" id="GO:0016558">
    <property type="term" value="P:protein import into peroxisome matrix"/>
    <property type="evidence" value="ECO:0000318"/>
    <property type="project" value="GO_Central"/>
</dbReference>
<dbReference type="GO" id="GO:0043335">
    <property type="term" value="P:protein unfolding"/>
    <property type="evidence" value="ECO:0000318"/>
    <property type="project" value="GO_Central"/>
</dbReference>
<dbReference type="CDD" id="cd19527">
    <property type="entry name" value="RecA-like_PEX6_r2"/>
    <property type="match status" value="1"/>
</dbReference>
<dbReference type="FunFam" id="3.40.50.300:FF:000109">
    <property type="entry name" value="Peroxisomal biogenesis factor 6"/>
    <property type="match status" value="1"/>
</dbReference>
<dbReference type="Gene3D" id="1.10.8.60">
    <property type="match status" value="1"/>
</dbReference>
<dbReference type="Gene3D" id="3.40.50.300">
    <property type="entry name" value="P-loop containing nucleotide triphosphate hydrolases"/>
    <property type="match status" value="2"/>
</dbReference>
<dbReference type="InterPro" id="IPR003593">
    <property type="entry name" value="AAA+_ATPase"/>
</dbReference>
<dbReference type="InterPro" id="IPR050168">
    <property type="entry name" value="AAA_ATPase_domain"/>
</dbReference>
<dbReference type="InterPro" id="IPR041569">
    <property type="entry name" value="AAA_lid_3"/>
</dbReference>
<dbReference type="InterPro" id="IPR003959">
    <property type="entry name" value="ATPase_AAA_core"/>
</dbReference>
<dbReference type="InterPro" id="IPR003960">
    <property type="entry name" value="ATPase_AAA_CS"/>
</dbReference>
<dbReference type="InterPro" id="IPR027417">
    <property type="entry name" value="P-loop_NTPase"/>
</dbReference>
<dbReference type="InterPro" id="IPR047533">
    <property type="entry name" value="RecA-like_PEX6_r2"/>
</dbReference>
<dbReference type="InterPro" id="IPR015415">
    <property type="entry name" value="Spast_Vps4_C"/>
</dbReference>
<dbReference type="PANTHER" id="PTHR23077">
    <property type="entry name" value="AAA-FAMILY ATPASE"/>
    <property type="match status" value="1"/>
</dbReference>
<dbReference type="PANTHER" id="PTHR23077:SF9">
    <property type="entry name" value="PEROXISOMAL ATPASE PEX6"/>
    <property type="match status" value="1"/>
</dbReference>
<dbReference type="Pfam" id="PF00004">
    <property type="entry name" value="AAA"/>
    <property type="match status" value="2"/>
</dbReference>
<dbReference type="Pfam" id="PF17862">
    <property type="entry name" value="AAA_lid_3"/>
    <property type="match status" value="1"/>
</dbReference>
<dbReference type="Pfam" id="PF09336">
    <property type="entry name" value="Vps4_C"/>
    <property type="match status" value="1"/>
</dbReference>
<dbReference type="SMART" id="SM00382">
    <property type="entry name" value="AAA"/>
    <property type="match status" value="2"/>
</dbReference>
<dbReference type="SUPFAM" id="SSF52540">
    <property type="entry name" value="P-loop containing nucleoside triphosphate hydrolases"/>
    <property type="match status" value="2"/>
</dbReference>
<dbReference type="PROSITE" id="PS00674">
    <property type="entry name" value="AAA"/>
    <property type="match status" value="1"/>
</dbReference>
<feature type="chain" id="PRO_0000084619" description="Peroxisomal ATPase pex6">
    <location>
        <begin position="1"/>
        <end position="948"/>
    </location>
</feature>
<feature type="binding site" evidence="2">
    <location>
        <begin position="695"/>
        <end position="702"/>
    </location>
    <ligand>
        <name>ATP</name>
        <dbReference type="ChEBI" id="CHEBI:30616"/>
    </ligand>
</feature>